<feature type="chain" id="PRO_1000024555" description="ATP-dependent Clp protease ATP-binding subunit ClpX">
    <location>
        <begin position="1"/>
        <end position="406"/>
    </location>
</feature>
<feature type="domain" description="ClpX-type ZB" evidence="2">
    <location>
        <begin position="1"/>
        <end position="52"/>
    </location>
</feature>
<feature type="binding site" evidence="2">
    <location>
        <position position="11"/>
    </location>
    <ligand>
        <name>Zn(2+)</name>
        <dbReference type="ChEBI" id="CHEBI:29105"/>
    </ligand>
</feature>
<feature type="binding site" evidence="2">
    <location>
        <position position="14"/>
    </location>
    <ligand>
        <name>Zn(2+)</name>
        <dbReference type="ChEBI" id="CHEBI:29105"/>
    </ligand>
</feature>
<feature type="binding site" evidence="2">
    <location>
        <position position="33"/>
    </location>
    <ligand>
        <name>Zn(2+)</name>
        <dbReference type="ChEBI" id="CHEBI:29105"/>
    </ligand>
</feature>
<feature type="binding site" evidence="2">
    <location>
        <position position="36"/>
    </location>
    <ligand>
        <name>Zn(2+)</name>
        <dbReference type="ChEBI" id="CHEBI:29105"/>
    </ligand>
</feature>
<feature type="binding site" evidence="1">
    <location>
        <begin position="114"/>
        <end position="121"/>
    </location>
    <ligand>
        <name>ATP</name>
        <dbReference type="ChEBI" id="CHEBI:30616"/>
    </ligand>
</feature>
<evidence type="ECO:0000255" key="1">
    <source>
        <dbReference type="HAMAP-Rule" id="MF_00175"/>
    </source>
</evidence>
<evidence type="ECO:0000255" key="2">
    <source>
        <dbReference type="PROSITE-ProRule" id="PRU01250"/>
    </source>
</evidence>
<organism>
    <name type="scientific">Ehrlichia ruminantium (strain Gardel)</name>
    <dbReference type="NCBI Taxonomy" id="302409"/>
    <lineage>
        <taxon>Bacteria</taxon>
        <taxon>Pseudomonadati</taxon>
        <taxon>Pseudomonadota</taxon>
        <taxon>Alphaproteobacteria</taxon>
        <taxon>Rickettsiales</taxon>
        <taxon>Anaplasmataceae</taxon>
        <taxon>Ehrlichia</taxon>
    </lineage>
</organism>
<comment type="function">
    <text evidence="1">ATP-dependent specificity component of the Clp protease. It directs the protease to specific substrates. Can perform chaperone functions in the absence of ClpP.</text>
</comment>
<comment type="subunit">
    <text evidence="1">Component of the ClpX-ClpP complex. Forms a hexameric ring that, in the presence of ATP, binds to fourteen ClpP subunits assembled into a disk-like structure with a central cavity, resembling the structure of eukaryotic proteasomes.</text>
</comment>
<comment type="similarity">
    <text evidence="1">Belongs to the ClpX chaperone family.</text>
</comment>
<sequence>MADNDKNSCSCSFCGKVHSEVRKLIAGPSVFICNECIDLCSGILQEEGSSYKKGDTLDLKPKEIKKVLDEYVIGQEHSKKVLSVAVYNHYKRLSNSGIISDVEISKSNVLLIGPTGSGKTLLARTLARVLQVPFAMADATTLTEAGYVGEDVESILLKLLQAANFNVEAAQRGIIYIDEVDKISRKSENASITRDVSGEGVQQALLKVIEGTVSSVPPQGGRKHPHQEFIQINTDNILFIFGGAFDGLEKIIESRHQGSNMGFEANVQKASKDKDIFCYTEPEDLVKFGLIPEFVGRIPVITSLGELDEATLCRILVEPKNSLVKQYKKLFEMDNINLEFDDSALSEIARKAAVRKAGARGLRAILENLLLDLMFETPGTFNVDQIVISKQMVEESMVNSRLFLKH</sequence>
<gene>
    <name evidence="1" type="primary">clpX</name>
    <name type="ordered locus">ERGA_CDS_01980</name>
</gene>
<accession>Q5FFG6</accession>
<name>CLPX_EHRRG</name>
<reference key="1">
    <citation type="journal article" date="2006" name="J. Bacteriol.">
        <title>Comparative genomic analysis of three strains of Ehrlichia ruminantium reveals an active process of genome size plasticity.</title>
        <authorList>
            <person name="Frutos R."/>
            <person name="Viari A."/>
            <person name="Ferraz C."/>
            <person name="Morgat A."/>
            <person name="Eychenie S."/>
            <person name="Kandassamy Y."/>
            <person name="Chantal I."/>
            <person name="Bensaid A."/>
            <person name="Coissac E."/>
            <person name="Vachiery N."/>
            <person name="Demaille J."/>
            <person name="Martinez D."/>
        </authorList>
    </citation>
    <scope>NUCLEOTIDE SEQUENCE [LARGE SCALE GENOMIC DNA]</scope>
    <source>
        <strain>Gardel</strain>
    </source>
</reference>
<keyword id="KW-0067">ATP-binding</keyword>
<keyword id="KW-0143">Chaperone</keyword>
<keyword id="KW-0479">Metal-binding</keyword>
<keyword id="KW-0547">Nucleotide-binding</keyword>
<keyword id="KW-0862">Zinc</keyword>
<dbReference type="EMBL" id="CR925677">
    <property type="protein sequence ID" value="CAI27650.1"/>
    <property type="molecule type" value="Genomic_DNA"/>
</dbReference>
<dbReference type="RefSeq" id="WP_011154887.1">
    <property type="nucleotide sequence ID" value="NC_006831.1"/>
</dbReference>
<dbReference type="SMR" id="Q5FFG6"/>
<dbReference type="GeneID" id="33057721"/>
<dbReference type="KEGG" id="erg:ERGA_CDS_01980"/>
<dbReference type="HOGENOM" id="CLU_014218_8_2_5"/>
<dbReference type="OrthoDB" id="9804062at2"/>
<dbReference type="Proteomes" id="UP000000533">
    <property type="component" value="Chromosome"/>
</dbReference>
<dbReference type="GO" id="GO:0009376">
    <property type="term" value="C:HslUV protease complex"/>
    <property type="evidence" value="ECO:0007669"/>
    <property type="project" value="TreeGrafter"/>
</dbReference>
<dbReference type="GO" id="GO:0005524">
    <property type="term" value="F:ATP binding"/>
    <property type="evidence" value="ECO:0007669"/>
    <property type="project" value="UniProtKB-UniRule"/>
</dbReference>
<dbReference type="GO" id="GO:0016887">
    <property type="term" value="F:ATP hydrolysis activity"/>
    <property type="evidence" value="ECO:0007669"/>
    <property type="project" value="InterPro"/>
</dbReference>
<dbReference type="GO" id="GO:0140662">
    <property type="term" value="F:ATP-dependent protein folding chaperone"/>
    <property type="evidence" value="ECO:0007669"/>
    <property type="project" value="InterPro"/>
</dbReference>
<dbReference type="GO" id="GO:0046983">
    <property type="term" value="F:protein dimerization activity"/>
    <property type="evidence" value="ECO:0007669"/>
    <property type="project" value="InterPro"/>
</dbReference>
<dbReference type="GO" id="GO:0051082">
    <property type="term" value="F:unfolded protein binding"/>
    <property type="evidence" value="ECO:0007669"/>
    <property type="project" value="UniProtKB-UniRule"/>
</dbReference>
<dbReference type="GO" id="GO:0008270">
    <property type="term" value="F:zinc ion binding"/>
    <property type="evidence" value="ECO:0007669"/>
    <property type="project" value="InterPro"/>
</dbReference>
<dbReference type="GO" id="GO:0051301">
    <property type="term" value="P:cell division"/>
    <property type="evidence" value="ECO:0007669"/>
    <property type="project" value="TreeGrafter"/>
</dbReference>
<dbReference type="GO" id="GO:0051603">
    <property type="term" value="P:proteolysis involved in protein catabolic process"/>
    <property type="evidence" value="ECO:0007669"/>
    <property type="project" value="TreeGrafter"/>
</dbReference>
<dbReference type="CDD" id="cd19497">
    <property type="entry name" value="RecA-like_ClpX"/>
    <property type="match status" value="1"/>
</dbReference>
<dbReference type="FunFam" id="1.10.8.60:FF:000002">
    <property type="entry name" value="ATP-dependent Clp protease ATP-binding subunit ClpX"/>
    <property type="match status" value="1"/>
</dbReference>
<dbReference type="FunFam" id="3.40.50.300:FF:000005">
    <property type="entry name" value="ATP-dependent Clp protease ATP-binding subunit ClpX"/>
    <property type="match status" value="1"/>
</dbReference>
<dbReference type="Gene3D" id="1.10.8.60">
    <property type="match status" value="1"/>
</dbReference>
<dbReference type="Gene3D" id="6.20.220.10">
    <property type="entry name" value="ClpX chaperone, C4-type zinc finger domain"/>
    <property type="match status" value="1"/>
</dbReference>
<dbReference type="Gene3D" id="3.40.50.300">
    <property type="entry name" value="P-loop containing nucleotide triphosphate hydrolases"/>
    <property type="match status" value="1"/>
</dbReference>
<dbReference type="HAMAP" id="MF_00175">
    <property type="entry name" value="ClpX"/>
    <property type="match status" value="1"/>
</dbReference>
<dbReference type="InterPro" id="IPR003593">
    <property type="entry name" value="AAA+_ATPase"/>
</dbReference>
<dbReference type="InterPro" id="IPR050052">
    <property type="entry name" value="ATP-dep_Clp_protease_ClpX"/>
</dbReference>
<dbReference type="InterPro" id="IPR003959">
    <property type="entry name" value="ATPase_AAA_core"/>
</dbReference>
<dbReference type="InterPro" id="IPR019489">
    <property type="entry name" value="Clp_ATPase_C"/>
</dbReference>
<dbReference type="InterPro" id="IPR004487">
    <property type="entry name" value="Clp_protease_ATP-bd_su_ClpX"/>
</dbReference>
<dbReference type="InterPro" id="IPR046425">
    <property type="entry name" value="ClpX_bact"/>
</dbReference>
<dbReference type="InterPro" id="IPR027417">
    <property type="entry name" value="P-loop_NTPase"/>
</dbReference>
<dbReference type="InterPro" id="IPR010603">
    <property type="entry name" value="Znf_CppX_C4"/>
</dbReference>
<dbReference type="InterPro" id="IPR038366">
    <property type="entry name" value="Znf_CppX_C4_sf"/>
</dbReference>
<dbReference type="NCBIfam" id="TIGR00382">
    <property type="entry name" value="clpX"/>
    <property type="match status" value="1"/>
</dbReference>
<dbReference type="NCBIfam" id="NF003745">
    <property type="entry name" value="PRK05342.1"/>
    <property type="match status" value="1"/>
</dbReference>
<dbReference type="PANTHER" id="PTHR48102:SF7">
    <property type="entry name" value="ATP-DEPENDENT CLP PROTEASE ATP-BINDING SUBUNIT CLPX-LIKE, MITOCHONDRIAL"/>
    <property type="match status" value="1"/>
</dbReference>
<dbReference type="PANTHER" id="PTHR48102">
    <property type="entry name" value="ATP-DEPENDENT CLP PROTEASE ATP-BINDING SUBUNIT CLPX-LIKE, MITOCHONDRIAL-RELATED"/>
    <property type="match status" value="1"/>
</dbReference>
<dbReference type="Pfam" id="PF07724">
    <property type="entry name" value="AAA_2"/>
    <property type="match status" value="1"/>
</dbReference>
<dbReference type="Pfam" id="PF10431">
    <property type="entry name" value="ClpB_D2-small"/>
    <property type="match status" value="1"/>
</dbReference>
<dbReference type="Pfam" id="PF06689">
    <property type="entry name" value="zf-C4_ClpX"/>
    <property type="match status" value="1"/>
</dbReference>
<dbReference type="SMART" id="SM00382">
    <property type="entry name" value="AAA"/>
    <property type="match status" value="1"/>
</dbReference>
<dbReference type="SMART" id="SM01086">
    <property type="entry name" value="ClpB_D2-small"/>
    <property type="match status" value="1"/>
</dbReference>
<dbReference type="SMART" id="SM00994">
    <property type="entry name" value="zf-C4_ClpX"/>
    <property type="match status" value="1"/>
</dbReference>
<dbReference type="SUPFAM" id="SSF57716">
    <property type="entry name" value="Glucocorticoid receptor-like (DNA-binding domain)"/>
    <property type="match status" value="1"/>
</dbReference>
<dbReference type="SUPFAM" id="SSF52540">
    <property type="entry name" value="P-loop containing nucleoside triphosphate hydrolases"/>
    <property type="match status" value="1"/>
</dbReference>
<dbReference type="PROSITE" id="PS51902">
    <property type="entry name" value="CLPX_ZB"/>
    <property type="match status" value="1"/>
</dbReference>
<protein>
    <recommendedName>
        <fullName evidence="1">ATP-dependent Clp protease ATP-binding subunit ClpX</fullName>
    </recommendedName>
</protein>
<proteinExistence type="inferred from homology"/>